<keyword id="KW-0445">Lipid transport</keyword>
<keyword id="KW-1185">Reference proteome</keyword>
<keyword id="KW-0964">Secreted</keyword>
<keyword id="KW-0732">Signal</keyword>
<keyword id="KW-0813">Transport</keyword>
<keyword id="KW-0850">VLDL</keyword>
<protein>
    <recommendedName>
        <fullName>Apolipoprotein C-I</fullName>
        <shortName>Apo-CI</shortName>
        <shortName>ApoC-I</shortName>
    </recommendedName>
    <alternativeName>
        <fullName>Apolipoprotein C1</fullName>
    </alternativeName>
    <component>
        <recommendedName>
            <fullName>Truncated apolipoprotein C-I</fullName>
        </recommendedName>
    </component>
</protein>
<feature type="signal peptide" evidence="1">
    <location>
        <begin position="1"/>
        <end position="26"/>
    </location>
</feature>
<feature type="chain" id="PRO_0000420974" description="Apolipoprotein C-I">
    <location>
        <begin position="27"/>
        <end position="86"/>
    </location>
</feature>
<feature type="chain" id="PRO_0000420975" description="Truncated apolipoprotein C-I" evidence="4">
    <location>
        <begin position="29"/>
        <end position="86"/>
    </location>
</feature>
<proteinExistence type="inferred from homology"/>
<organism>
    <name type="scientific">Aotus nancymaae</name>
    <name type="common">Ma's night monkey</name>
    <dbReference type="NCBI Taxonomy" id="37293"/>
    <lineage>
        <taxon>Eukaryota</taxon>
        <taxon>Metazoa</taxon>
        <taxon>Chordata</taxon>
        <taxon>Craniata</taxon>
        <taxon>Vertebrata</taxon>
        <taxon>Euteleostomi</taxon>
        <taxon>Mammalia</taxon>
        <taxon>Eutheria</taxon>
        <taxon>Euarchontoglires</taxon>
        <taxon>Primates</taxon>
        <taxon>Haplorrhini</taxon>
        <taxon>Platyrrhini</taxon>
        <taxon>Aotidae</taxon>
        <taxon>Aotus</taxon>
    </lineage>
</organism>
<evidence type="ECO:0000250" key="1"/>
<evidence type="ECO:0000250" key="2">
    <source>
        <dbReference type="UniProtKB" id="P02654"/>
    </source>
</evidence>
<evidence type="ECO:0000250" key="3">
    <source>
        <dbReference type="UniProtKB" id="P33047"/>
    </source>
</evidence>
<evidence type="ECO:0000250" key="4">
    <source>
        <dbReference type="UniProtKB" id="P86336"/>
    </source>
</evidence>
<evidence type="ECO:0000303" key="5">
    <source>
    </source>
</evidence>
<evidence type="ECO:0000305" key="6"/>
<sequence length="86" mass="9661">MRLFLSLPVLVVALLMILEGPGPAQGAPEAVDTSSGLDKLKEFGTTLEDKVREFFNRVKESDIPAKTRNWFSETLQKVKEKLRIES</sequence>
<name>APOC1_AOTNA</name>
<comment type="function">
    <text evidence="2 3">Inhibitor of lipoprotein binding to the low density lipoprotein (LDL) receptor, LDL receptor-related protein, and very low density lipoprotein (VLDL) receptor. Associates with high density lipoproteins (HDL) and the triacylglycerol-rich lipoproteins in the plasma and makes up about 10% of the protein of the VLDL and 2% of that of HDL. Appears to interfere directly with fatty acid uptake and is also the major plasma inhibitor of cholesteryl ester transfer protein (CETP). Binds free fatty acids and reduces their intracellular esterification. Modulates the interaction of APOE with beta-migrating VLDL and inhibits binding of beta-VLDL to the LDL receptor-related protein.</text>
</comment>
<comment type="subcellular location">
    <subcellularLocation>
        <location evidence="2">Secreted</location>
    </subcellularLocation>
</comment>
<comment type="miscellaneous">
    <text evidence="5">Apolipoprotein C-I is present in acidic (APOC1A) and basic (APOC1B) forms in P.paniscus, P.abelii and P.troglodytes and perhaps also in baboons and macaques. The two genes for ApoC-I arose through a duplication process that occurred after the divergence of New World monkeys from the human lineage. In human, the acidic form has become a pseudogene sometime between the divergence of bonobos and chimpanzees from the human lineage and the appearance of the Denisovans. Pseudogenization resulted when the codon for the penultimate amino acid in the signal sequence was changed to a stop codon.</text>
</comment>
<comment type="similarity">
    <text evidence="6">Belongs to the apolipoprotein C1 family.</text>
</comment>
<reference key="1">
    <citation type="submission" date="2004-12" db="EMBL/GenBank/DDBJ databases">
        <authorList>
            <person name="Cheng J.-F."/>
            <person name="Hamilton M."/>
            <person name="Peng Y."/>
            <person name="Hosseini R."/>
            <person name="Peng Z."/>
            <person name="Malinov I."/>
            <person name="Rubin E.M."/>
        </authorList>
    </citation>
    <scope>NUCLEOTIDE SEQUENCE [LARGE SCALE GENOMIC DNA]</scope>
</reference>
<reference key="2">
    <citation type="unpublished observations" date="2012-11">
        <authorList>
            <person name="Puppione D.L."/>
        </authorList>
    </citation>
    <scope>IDENTIFICATION</scope>
</reference>
<reference key="3">
    <citation type="journal article" date="2013" name="Front. Biol.">
        <title>Proteogenomic Review of the Changes in Primate apoC-I during Evolution.</title>
        <authorList>
            <person name="Puppione D."/>
            <person name="Whitelegge J.P."/>
        </authorList>
    </citation>
    <scope>REVIEW</scope>
</reference>
<reference key="4">
    <citation type="journal article" date="2014" name="Comp. Biochem. Physiol.">
        <title>Higher primates, but not New World monkeys, have a duplicate set of enhancers flanking their apoC-I genes.</title>
        <authorList>
            <person name="Puppione D.L."/>
        </authorList>
    </citation>
    <scope>GENE DUPLICATION</scope>
</reference>
<gene>
    <name type="primary">APOC1</name>
</gene>
<accession>P0DKV2</accession>
<dbReference type="EMBL" id="AC146520">
    <property type="status" value="NOT_ANNOTATED_CDS"/>
    <property type="molecule type" value="Genomic_DNA"/>
</dbReference>
<dbReference type="RefSeq" id="XP_012302076.1">
    <property type="nucleotide sequence ID" value="XM_012446653.3"/>
</dbReference>
<dbReference type="RefSeq" id="XP_012302077.1">
    <property type="nucleotide sequence ID" value="XM_012446654.1"/>
</dbReference>
<dbReference type="SMR" id="P0DKV2"/>
<dbReference type="GeneID" id="105713101"/>
<dbReference type="KEGG" id="anan:105713101"/>
<dbReference type="CTD" id="341"/>
<dbReference type="OrthoDB" id="8941712at2759"/>
<dbReference type="Proteomes" id="UP000233020">
    <property type="component" value="Whole Genome Shotgun Assembly"/>
</dbReference>
<dbReference type="GO" id="GO:0034364">
    <property type="term" value="C:high-density lipoprotein particle"/>
    <property type="evidence" value="ECO:0007669"/>
    <property type="project" value="TreeGrafter"/>
</dbReference>
<dbReference type="GO" id="GO:0034361">
    <property type="term" value="C:very-low-density lipoprotein particle"/>
    <property type="evidence" value="ECO:0007669"/>
    <property type="project" value="UniProtKB-KW"/>
</dbReference>
<dbReference type="GO" id="GO:0005504">
    <property type="term" value="F:fatty acid binding"/>
    <property type="evidence" value="ECO:0007669"/>
    <property type="project" value="TreeGrafter"/>
</dbReference>
<dbReference type="GO" id="GO:0004859">
    <property type="term" value="F:phospholipase inhibitor activity"/>
    <property type="evidence" value="ECO:0007669"/>
    <property type="project" value="TreeGrafter"/>
</dbReference>
<dbReference type="GO" id="GO:0006869">
    <property type="term" value="P:lipid transport"/>
    <property type="evidence" value="ECO:0007669"/>
    <property type="project" value="UniProtKB-KW"/>
</dbReference>
<dbReference type="GO" id="GO:0042157">
    <property type="term" value="P:lipoprotein metabolic process"/>
    <property type="evidence" value="ECO:0007669"/>
    <property type="project" value="InterPro"/>
</dbReference>
<dbReference type="GO" id="GO:0032375">
    <property type="term" value="P:negative regulation of cholesterol transport"/>
    <property type="evidence" value="ECO:0007669"/>
    <property type="project" value="TreeGrafter"/>
</dbReference>
<dbReference type="GO" id="GO:0050995">
    <property type="term" value="P:negative regulation of lipid catabolic process"/>
    <property type="evidence" value="ECO:0007669"/>
    <property type="project" value="TreeGrafter"/>
</dbReference>
<dbReference type="GO" id="GO:0010916">
    <property type="term" value="P:negative regulation of very-low-density lipoprotein particle clearance"/>
    <property type="evidence" value="ECO:0007669"/>
    <property type="project" value="TreeGrafter"/>
</dbReference>
<dbReference type="GO" id="GO:0006641">
    <property type="term" value="P:triglyceride metabolic process"/>
    <property type="evidence" value="ECO:0007669"/>
    <property type="project" value="TreeGrafter"/>
</dbReference>
<dbReference type="GO" id="GO:0034447">
    <property type="term" value="P:very-low-density lipoprotein particle clearance"/>
    <property type="evidence" value="ECO:0007669"/>
    <property type="project" value="TreeGrafter"/>
</dbReference>
<dbReference type="Gene3D" id="4.10.260.30">
    <property type="entry name" value="Apolipoprotein C-I"/>
    <property type="match status" value="1"/>
</dbReference>
<dbReference type="InterPro" id="IPR043081">
    <property type="entry name" value="ApoC-1_sf"/>
</dbReference>
<dbReference type="InterPro" id="IPR006781">
    <property type="entry name" value="ApoC-I"/>
</dbReference>
<dbReference type="PANTHER" id="PTHR16565">
    <property type="entry name" value="APOLIPOPROTEIN C-I"/>
    <property type="match status" value="1"/>
</dbReference>
<dbReference type="PANTHER" id="PTHR16565:SF2">
    <property type="entry name" value="APOLIPOPROTEIN C-I"/>
    <property type="match status" value="1"/>
</dbReference>
<dbReference type="Pfam" id="PF04691">
    <property type="entry name" value="ApoC-I"/>
    <property type="match status" value="1"/>
</dbReference>